<protein>
    <recommendedName>
        <fullName evidence="1">Protoheme IX farnesyltransferase 2</fullName>
        <ecNumber evidence="1">2.5.1.141</ecNumber>
    </recommendedName>
    <alternativeName>
        <fullName evidence="1">Heme B farnesyltransferase 2</fullName>
    </alternativeName>
    <alternativeName>
        <fullName evidence="1">Heme O synthase 2</fullName>
    </alternativeName>
</protein>
<reference key="1">
    <citation type="submission" date="2008-02" db="EMBL/GenBank/DDBJ databases">
        <title>Complete sequence of Pseudomonas putida W619.</title>
        <authorList>
            <person name="Copeland A."/>
            <person name="Lucas S."/>
            <person name="Lapidus A."/>
            <person name="Barry K."/>
            <person name="Detter J.C."/>
            <person name="Glavina del Rio T."/>
            <person name="Dalin E."/>
            <person name="Tice H."/>
            <person name="Pitluck S."/>
            <person name="Chain P."/>
            <person name="Malfatti S."/>
            <person name="Shin M."/>
            <person name="Vergez L."/>
            <person name="Schmutz J."/>
            <person name="Larimer F."/>
            <person name="Land M."/>
            <person name="Hauser L."/>
            <person name="Kyrpides N."/>
            <person name="Kim E."/>
            <person name="Taghavi S."/>
            <person name="Vangronsveld D."/>
            <person name="van der Lelie D."/>
            <person name="Richardson P."/>
        </authorList>
    </citation>
    <scope>NUCLEOTIDE SEQUENCE [LARGE SCALE GENOMIC DNA]</scope>
    <source>
        <strain>W619</strain>
    </source>
</reference>
<sequence>MSVKHFIQITKPGIIFGNVLSVAGGFFLASKGHVDFALFLAVVIGTSLVVASGCVFNNCIDRDIDIKMERTKNRVMVQGGMSLTLALVYATLLGVAGFSLLYVQANPLSAFCALIGFIVYVGFYSLWLKRKSVHGTLVGSLSGAMPPVIGYCAVSNSFDLAAVTLLVMFSLWQMPHSFAIAIFRFKDYSAANIPVLPVARGILAAKKQIVLYVLAFVLATLMLTLGGYAGLGYLAVAAAMGLYWLYMAWGGYKAEDDSKWARKVFGFSILTVTALSVMMGVDSQTAADVLMTYAR</sequence>
<name>CYOE2_PSEPW</name>
<comment type="function">
    <text evidence="1">Converts heme B (protoheme IX) to heme O by substitution of the vinyl group on carbon 2 of heme B porphyrin ring with a hydroxyethyl farnesyl side group.</text>
</comment>
<comment type="catalytic activity">
    <reaction evidence="1">
        <text>heme b + (2E,6E)-farnesyl diphosphate + H2O = Fe(II)-heme o + diphosphate</text>
        <dbReference type="Rhea" id="RHEA:28070"/>
        <dbReference type="ChEBI" id="CHEBI:15377"/>
        <dbReference type="ChEBI" id="CHEBI:33019"/>
        <dbReference type="ChEBI" id="CHEBI:60344"/>
        <dbReference type="ChEBI" id="CHEBI:60530"/>
        <dbReference type="ChEBI" id="CHEBI:175763"/>
        <dbReference type="EC" id="2.5.1.141"/>
    </reaction>
</comment>
<comment type="pathway">
    <text evidence="1">Porphyrin-containing compound metabolism; heme O biosynthesis; heme O from protoheme: step 1/1.</text>
</comment>
<comment type="subcellular location">
    <subcellularLocation>
        <location evidence="1">Cell inner membrane</location>
        <topology evidence="1">Multi-pass membrane protein</topology>
    </subcellularLocation>
</comment>
<comment type="miscellaneous">
    <text evidence="1">Carbon 2 of the heme B porphyrin ring is defined according to the Fischer nomenclature.</text>
</comment>
<comment type="similarity">
    <text evidence="1">Belongs to the UbiA prenyltransferase family. Protoheme IX farnesyltransferase subfamily.</text>
</comment>
<organism>
    <name type="scientific">Pseudomonas putida (strain W619)</name>
    <dbReference type="NCBI Taxonomy" id="390235"/>
    <lineage>
        <taxon>Bacteria</taxon>
        <taxon>Pseudomonadati</taxon>
        <taxon>Pseudomonadota</taxon>
        <taxon>Gammaproteobacteria</taxon>
        <taxon>Pseudomonadales</taxon>
        <taxon>Pseudomonadaceae</taxon>
        <taxon>Pseudomonas</taxon>
    </lineage>
</organism>
<proteinExistence type="inferred from homology"/>
<feature type="chain" id="PRO_0000346008" description="Protoheme IX farnesyltransferase 2">
    <location>
        <begin position="1"/>
        <end position="295"/>
    </location>
</feature>
<feature type="transmembrane region" description="Helical" evidence="1">
    <location>
        <begin position="9"/>
        <end position="29"/>
    </location>
</feature>
<feature type="transmembrane region" description="Helical" evidence="1">
    <location>
        <begin position="36"/>
        <end position="56"/>
    </location>
</feature>
<feature type="transmembrane region" description="Helical" evidence="1">
    <location>
        <begin position="83"/>
        <end position="103"/>
    </location>
</feature>
<feature type="transmembrane region" description="Helical" evidence="1">
    <location>
        <begin position="108"/>
        <end position="128"/>
    </location>
</feature>
<feature type="transmembrane region" description="Helical" evidence="1">
    <location>
        <begin position="135"/>
        <end position="155"/>
    </location>
</feature>
<feature type="transmembrane region" description="Helical" evidence="1">
    <location>
        <begin position="163"/>
        <end position="183"/>
    </location>
</feature>
<feature type="transmembrane region" description="Helical" evidence="1">
    <location>
        <begin position="209"/>
        <end position="229"/>
    </location>
</feature>
<feature type="transmembrane region" description="Helical" evidence="1">
    <location>
        <begin position="230"/>
        <end position="250"/>
    </location>
</feature>
<feature type="transmembrane region" description="Helical" evidence="1">
    <location>
        <begin position="264"/>
        <end position="284"/>
    </location>
</feature>
<gene>
    <name evidence="1" type="primary">cyoE2</name>
    <name type="ordered locus">PputW619_4372</name>
</gene>
<keyword id="KW-0997">Cell inner membrane</keyword>
<keyword id="KW-1003">Cell membrane</keyword>
<keyword id="KW-0350">Heme biosynthesis</keyword>
<keyword id="KW-0472">Membrane</keyword>
<keyword id="KW-0808">Transferase</keyword>
<keyword id="KW-0812">Transmembrane</keyword>
<keyword id="KW-1133">Transmembrane helix</keyword>
<evidence type="ECO:0000255" key="1">
    <source>
        <dbReference type="HAMAP-Rule" id="MF_00154"/>
    </source>
</evidence>
<dbReference type="EC" id="2.5.1.141" evidence="1"/>
<dbReference type="EMBL" id="CP000949">
    <property type="protein sequence ID" value="ACA74852.1"/>
    <property type="molecule type" value="Genomic_DNA"/>
</dbReference>
<dbReference type="SMR" id="B1JDU9"/>
<dbReference type="STRING" id="390235.PputW619_4372"/>
<dbReference type="KEGG" id="ppw:PputW619_4372"/>
<dbReference type="eggNOG" id="COG0109">
    <property type="taxonomic scope" value="Bacteria"/>
</dbReference>
<dbReference type="HOGENOM" id="CLU_029631_0_0_6"/>
<dbReference type="OrthoDB" id="9814417at2"/>
<dbReference type="UniPathway" id="UPA00834">
    <property type="reaction ID" value="UER00712"/>
</dbReference>
<dbReference type="GO" id="GO:0005886">
    <property type="term" value="C:plasma membrane"/>
    <property type="evidence" value="ECO:0007669"/>
    <property type="project" value="UniProtKB-SubCell"/>
</dbReference>
<dbReference type="GO" id="GO:0008495">
    <property type="term" value="F:protoheme IX farnesyltransferase activity"/>
    <property type="evidence" value="ECO:0007669"/>
    <property type="project" value="UniProtKB-UniRule"/>
</dbReference>
<dbReference type="GO" id="GO:0048034">
    <property type="term" value="P:heme O biosynthetic process"/>
    <property type="evidence" value="ECO:0007669"/>
    <property type="project" value="UniProtKB-UniRule"/>
</dbReference>
<dbReference type="CDD" id="cd13957">
    <property type="entry name" value="PT_UbiA_Cox10"/>
    <property type="match status" value="1"/>
</dbReference>
<dbReference type="FunFam" id="1.10.357.140:FF:000001">
    <property type="entry name" value="Protoheme IX farnesyltransferase"/>
    <property type="match status" value="1"/>
</dbReference>
<dbReference type="Gene3D" id="1.10.357.140">
    <property type="entry name" value="UbiA prenyltransferase"/>
    <property type="match status" value="1"/>
</dbReference>
<dbReference type="HAMAP" id="MF_00154">
    <property type="entry name" value="CyoE_CtaB"/>
    <property type="match status" value="1"/>
</dbReference>
<dbReference type="InterPro" id="IPR006369">
    <property type="entry name" value="Protohaem_IX_farnesylTrfase"/>
</dbReference>
<dbReference type="InterPro" id="IPR000537">
    <property type="entry name" value="UbiA_prenyltransferase"/>
</dbReference>
<dbReference type="InterPro" id="IPR030470">
    <property type="entry name" value="UbiA_prenylTrfase_CS"/>
</dbReference>
<dbReference type="InterPro" id="IPR044878">
    <property type="entry name" value="UbiA_sf"/>
</dbReference>
<dbReference type="NCBIfam" id="TIGR01473">
    <property type="entry name" value="cyoE_ctaB"/>
    <property type="match status" value="1"/>
</dbReference>
<dbReference type="NCBIfam" id="NF003348">
    <property type="entry name" value="PRK04375.1-1"/>
    <property type="match status" value="1"/>
</dbReference>
<dbReference type="PANTHER" id="PTHR43448">
    <property type="entry name" value="PROTOHEME IX FARNESYLTRANSFERASE, MITOCHONDRIAL"/>
    <property type="match status" value="1"/>
</dbReference>
<dbReference type="PANTHER" id="PTHR43448:SF2">
    <property type="entry name" value="PROTOHEME IX FARNESYLTRANSFERASE, MITOCHONDRIAL"/>
    <property type="match status" value="1"/>
</dbReference>
<dbReference type="Pfam" id="PF01040">
    <property type="entry name" value="UbiA"/>
    <property type="match status" value="1"/>
</dbReference>
<dbReference type="PROSITE" id="PS00943">
    <property type="entry name" value="UBIA"/>
    <property type="match status" value="1"/>
</dbReference>
<accession>B1JDU9</accession>